<reference key="1">
    <citation type="journal article" date="2005" name="BMC Biol.">
        <title>The sequence of rice chromosomes 11 and 12, rich in disease resistance genes and recent gene duplications.</title>
        <authorList>
            <consortium name="The rice chromosomes 11 and 12 sequencing consortia"/>
        </authorList>
    </citation>
    <scope>NUCLEOTIDE SEQUENCE [LARGE SCALE GENOMIC DNA]</scope>
    <source>
        <strain>cv. Nipponbare</strain>
    </source>
</reference>
<reference key="2">
    <citation type="journal article" date="2005" name="Nature">
        <title>The map-based sequence of the rice genome.</title>
        <authorList>
            <consortium name="International rice genome sequencing project (IRGSP)"/>
        </authorList>
    </citation>
    <scope>NUCLEOTIDE SEQUENCE [LARGE SCALE GENOMIC DNA]</scope>
    <source>
        <strain>cv. Nipponbare</strain>
    </source>
</reference>
<reference key="3">
    <citation type="journal article" date="2008" name="Nucleic Acids Res.">
        <title>The rice annotation project database (RAP-DB): 2008 update.</title>
        <authorList>
            <consortium name="The rice annotation project (RAP)"/>
        </authorList>
    </citation>
    <scope>GENOME REANNOTATION</scope>
    <source>
        <strain>cv. Nipponbare</strain>
    </source>
</reference>
<reference key="4">
    <citation type="journal article" date="2013" name="Rice">
        <title>Improvement of the Oryza sativa Nipponbare reference genome using next generation sequence and optical map data.</title>
        <authorList>
            <person name="Kawahara Y."/>
            <person name="de la Bastide M."/>
            <person name="Hamilton J.P."/>
            <person name="Kanamori H."/>
            <person name="McCombie W.R."/>
            <person name="Ouyang S."/>
            <person name="Schwartz D.C."/>
            <person name="Tanaka T."/>
            <person name="Wu J."/>
            <person name="Zhou S."/>
            <person name="Childs K.L."/>
            <person name="Davidson R.M."/>
            <person name="Lin H."/>
            <person name="Quesada-Ocampo L."/>
            <person name="Vaillancourt B."/>
            <person name="Sakai H."/>
            <person name="Lee S.S."/>
            <person name="Kim J."/>
            <person name="Numa H."/>
            <person name="Itoh T."/>
            <person name="Buell C.R."/>
            <person name="Matsumoto T."/>
        </authorList>
    </citation>
    <scope>GENOME REANNOTATION</scope>
    <source>
        <strain>cv. Nipponbare</strain>
    </source>
</reference>
<reference key="5">
    <citation type="journal article" date="2005" name="PLoS Biol.">
        <title>The genomes of Oryza sativa: a history of duplications.</title>
        <authorList>
            <person name="Yu J."/>
            <person name="Wang J."/>
            <person name="Lin W."/>
            <person name="Li S."/>
            <person name="Li H."/>
            <person name="Zhou J."/>
            <person name="Ni P."/>
            <person name="Dong W."/>
            <person name="Hu S."/>
            <person name="Zeng C."/>
            <person name="Zhang J."/>
            <person name="Zhang Y."/>
            <person name="Li R."/>
            <person name="Xu Z."/>
            <person name="Li S."/>
            <person name="Li X."/>
            <person name="Zheng H."/>
            <person name="Cong L."/>
            <person name="Lin L."/>
            <person name="Yin J."/>
            <person name="Geng J."/>
            <person name="Li G."/>
            <person name="Shi J."/>
            <person name="Liu J."/>
            <person name="Lv H."/>
            <person name="Li J."/>
            <person name="Wang J."/>
            <person name="Deng Y."/>
            <person name="Ran L."/>
            <person name="Shi X."/>
            <person name="Wang X."/>
            <person name="Wu Q."/>
            <person name="Li C."/>
            <person name="Ren X."/>
            <person name="Wang J."/>
            <person name="Wang X."/>
            <person name="Li D."/>
            <person name="Liu D."/>
            <person name="Zhang X."/>
            <person name="Ji Z."/>
            <person name="Zhao W."/>
            <person name="Sun Y."/>
            <person name="Zhang Z."/>
            <person name="Bao J."/>
            <person name="Han Y."/>
            <person name="Dong L."/>
            <person name="Ji J."/>
            <person name="Chen P."/>
            <person name="Wu S."/>
            <person name="Liu J."/>
            <person name="Xiao Y."/>
            <person name="Bu D."/>
            <person name="Tan J."/>
            <person name="Yang L."/>
            <person name="Ye C."/>
            <person name="Zhang J."/>
            <person name="Xu J."/>
            <person name="Zhou Y."/>
            <person name="Yu Y."/>
            <person name="Zhang B."/>
            <person name="Zhuang S."/>
            <person name="Wei H."/>
            <person name="Liu B."/>
            <person name="Lei M."/>
            <person name="Yu H."/>
            <person name="Li Y."/>
            <person name="Xu H."/>
            <person name="Wei S."/>
            <person name="He X."/>
            <person name="Fang L."/>
            <person name="Zhang Z."/>
            <person name="Zhang Y."/>
            <person name="Huang X."/>
            <person name="Su Z."/>
            <person name="Tong W."/>
            <person name="Li J."/>
            <person name="Tong Z."/>
            <person name="Li S."/>
            <person name="Ye J."/>
            <person name="Wang L."/>
            <person name="Fang L."/>
            <person name="Lei T."/>
            <person name="Chen C.-S."/>
            <person name="Chen H.-C."/>
            <person name="Xu Z."/>
            <person name="Li H."/>
            <person name="Huang H."/>
            <person name="Zhang F."/>
            <person name="Xu H."/>
            <person name="Li N."/>
            <person name="Zhao C."/>
            <person name="Li S."/>
            <person name="Dong L."/>
            <person name="Huang Y."/>
            <person name="Li L."/>
            <person name="Xi Y."/>
            <person name="Qi Q."/>
            <person name="Li W."/>
            <person name="Zhang B."/>
            <person name="Hu W."/>
            <person name="Zhang Y."/>
            <person name="Tian X."/>
            <person name="Jiao Y."/>
            <person name="Liang X."/>
            <person name="Jin J."/>
            <person name="Gao L."/>
            <person name="Zheng W."/>
            <person name="Hao B."/>
            <person name="Liu S.-M."/>
            <person name="Wang W."/>
            <person name="Yuan L."/>
            <person name="Cao M."/>
            <person name="McDermott J."/>
            <person name="Samudrala R."/>
            <person name="Wang J."/>
            <person name="Wong G.K.-S."/>
            <person name="Yang H."/>
        </authorList>
    </citation>
    <scope>NUCLEOTIDE SEQUENCE [LARGE SCALE GENOMIC DNA]</scope>
    <source>
        <strain>cv. Nipponbare</strain>
    </source>
</reference>
<reference key="6">
    <citation type="journal article" date="2003" name="Science">
        <title>Collection, mapping, and annotation of over 28,000 cDNA clones from japonica rice.</title>
        <authorList>
            <consortium name="The rice full-length cDNA consortium"/>
        </authorList>
    </citation>
    <scope>NUCLEOTIDE SEQUENCE [LARGE SCALE MRNA]</scope>
    <source>
        <strain>cv. Nipponbare</strain>
    </source>
</reference>
<name>NRAM6_ORYSJ</name>
<feature type="chain" id="PRO_0000405572" description="Metal transporter Nramp6">
    <location>
        <begin position="1"/>
        <end position="541"/>
    </location>
</feature>
<feature type="transmembrane region" description="Helical" evidence="2">
    <location>
        <begin position="87"/>
        <end position="107"/>
    </location>
</feature>
<feature type="transmembrane region" description="Helical" evidence="2">
    <location>
        <begin position="120"/>
        <end position="140"/>
    </location>
</feature>
<feature type="transmembrane region" description="Helical" evidence="2">
    <location>
        <begin position="172"/>
        <end position="192"/>
    </location>
</feature>
<feature type="transmembrane region" description="Helical" evidence="2">
    <location>
        <begin position="196"/>
        <end position="216"/>
    </location>
</feature>
<feature type="transmembrane region" description="Helical" evidence="2">
    <location>
        <begin position="224"/>
        <end position="244"/>
    </location>
</feature>
<feature type="transmembrane region" description="Helical" evidence="2">
    <location>
        <begin position="270"/>
        <end position="290"/>
    </location>
</feature>
<feature type="transmembrane region" description="Helical" evidence="2">
    <location>
        <begin position="316"/>
        <end position="336"/>
    </location>
</feature>
<feature type="transmembrane region" description="Helical" evidence="2">
    <location>
        <begin position="358"/>
        <end position="378"/>
    </location>
</feature>
<feature type="transmembrane region" description="Helical" evidence="2">
    <location>
        <begin position="404"/>
        <end position="424"/>
    </location>
</feature>
<feature type="transmembrane region" description="Helical" evidence="2">
    <location>
        <begin position="436"/>
        <end position="456"/>
    </location>
</feature>
<feature type="transmembrane region" description="Helical" evidence="2">
    <location>
        <begin position="474"/>
        <end position="494"/>
    </location>
</feature>
<feature type="transmembrane region" description="Helical" evidence="2">
    <location>
        <begin position="502"/>
        <end position="522"/>
    </location>
</feature>
<feature type="region of interest" description="Disordered" evidence="3">
    <location>
        <begin position="1"/>
        <end position="44"/>
    </location>
</feature>
<feature type="compositionally biased region" description="Low complexity" evidence="3">
    <location>
        <begin position="1"/>
        <end position="18"/>
    </location>
</feature>
<sequence length="541" mass="58932">MAPLPAAATATASSAATPADDEAHSLLPSTPSNEEDDDDLEERAYEATEKVIVSISDFPDADDDEEESGLATSTAASGIPPFSWRKLWLFTGPGFLMSIAFLDPGNLEGDLQAGAVAGDTLLWLLLWATSMGLLVQLLAARVGVATGRHLAELCRDEYPSWARRALWLMAEVAMVGADIQEVIGSAIAIKILSRGFLPLWAGVVITALDCFIFLSLENYGVRKLEAVFAILIATMAVSFAWMFTDTKPNMKNLFIGILVPKLSSRTIRQAVGVVGCVIMPHNVFLHSALVQSRKIDPNKEHQVREALRYYSIESTIALAVSFMINLFVTTVFAKGFYGTKEAGNIGLENAGQYLQEKFGGGFFPILYIWGIGLLAAGQSSTITGTYAGQFIMGGFLNLKLKKWIRSLITRSFAIVPTIIVALFFDKSDSLDVLNEWLNVLQSIQIPFALIPLITLVSKEKVMGVFKIGRNTQAVTWTVATLLITINGYLLLDFFSSEIRGLLSGSILCVAVLAYASFVLYLILRGTELPNQIITTIRKSFS</sequence>
<dbReference type="EMBL" id="DP000011">
    <property type="protein sequence ID" value="ABA99133.1"/>
    <property type="molecule type" value="Genomic_DNA"/>
</dbReference>
<dbReference type="EMBL" id="AP008218">
    <property type="protein sequence ID" value="BAF30154.1"/>
    <property type="molecule type" value="Genomic_DNA"/>
</dbReference>
<dbReference type="EMBL" id="AP014968">
    <property type="protein sequence ID" value="BAT17821.1"/>
    <property type="molecule type" value="Genomic_DNA"/>
</dbReference>
<dbReference type="EMBL" id="CM000149">
    <property type="protein sequence ID" value="EAZ21011.1"/>
    <property type="molecule type" value="Genomic_DNA"/>
</dbReference>
<dbReference type="EMBL" id="AK071485">
    <property type="status" value="NOT_ANNOTATED_CDS"/>
    <property type="molecule type" value="mRNA"/>
</dbReference>
<dbReference type="RefSeq" id="XP_015618209.1">
    <property type="nucleotide sequence ID" value="XM_015762723.1"/>
</dbReference>
<dbReference type="SMR" id="Q2QN30"/>
<dbReference type="FunCoup" id="Q2QN30">
    <property type="interactions" value="1727"/>
</dbReference>
<dbReference type="STRING" id="39947.Q2QN30"/>
<dbReference type="PaxDb" id="39947-Q2QN30"/>
<dbReference type="EnsemblPlants" id="Os12t0581600-01">
    <property type="protein sequence ID" value="Os12t0581600-01"/>
    <property type="gene ID" value="Os12g0581600"/>
</dbReference>
<dbReference type="Gramene" id="Os12t0581600-01">
    <property type="protein sequence ID" value="Os12t0581600-01"/>
    <property type="gene ID" value="Os12g0581600"/>
</dbReference>
<dbReference type="KEGG" id="dosa:Os12g0581600"/>
<dbReference type="eggNOG" id="KOG1291">
    <property type="taxonomic scope" value="Eukaryota"/>
</dbReference>
<dbReference type="HOGENOM" id="CLU_020088_5_1_1"/>
<dbReference type="InParanoid" id="Q2QN30"/>
<dbReference type="OMA" id="PWMQFYQ"/>
<dbReference type="OrthoDB" id="409173at2759"/>
<dbReference type="Proteomes" id="UP000000763">
    <property type="component" value="Chromosome 12"/>
</dbReference>
<dbReference type="Proteomes" id="UP000007752">
    <property type="component" value="Chromosome 12"/>
</dbReference>
<dbReference type="Proteomes" id="UP000059680">
    <property type="component" value="Chromosome 12"/>
</dbReference>
<dbReference type="GO" id="GO:0016020">
    <property type="term" value="C:membrane"/>
    <property type="evidence" value="ECO:0007669"/>
    <property type="project" value="UniProtKB-SubCell"/>
</dbReference>
<dbReference type="GO" id="GO:0005802">
    <property type="term" value="C:trans-Golgi network"/>
    <property type="evidence" value="ECO:0000318"/>
    <property type="project" value="GO_Central"/>
</dbReference>
<dbReference type="GO" id="GO:0015086">
    <property type="term" value="F:cadmium ion transmembrane transporter activity"/>
    <property type="evidence" value="ECO:0000318"/>
    <property type="project" value="GO_Central"/>
</dbReference>
<dbReference type="GO" id="GO:0005384">
    <property type="term" value="F:manganese ion transmembrane transporter activity"/>
    <property type="evidence" value="ECO:0000318"/>
    <property type="project" value="GO_Central"/>
</dbReference>
<dbReference type="GO" id="GO:0034755">
    <property type="term" value="P:iron ion transmembrane transport"/>
    <property type="evidence" value="ECO:0000318"/>
    <property type="project" value="GO_Central"/>
</dbReference>
<dbReference type="GO" id="GO:0006828">
    <property type="term" value="P:manganese ion transport"/>
    <property type="evidence" value="ECO:0000318"/>
    <property type="project" value="GO_Central"/>
</dbReference>
<dbReference type="HAMAP" id="MF_00221">
    <property type="entry name" value="NRAMP"/>
    <property type="match status" value="1"/>
</dbReference>
<dbReference type="InterPro" id="IPR001046">
    <property type="entry name" value="NRAMP_fam"/>
</dbReference>
<dbReference type="NCBIfam" id="TIGR01197">
    <property type="entry name" value="nramp"/>
    <property type="match status" value="1"/>
</dbReference>
<dbReference type="NCBIfam" id="NF037982">
    <property type="entry name" value="Nramp_1"/>
    <property type="match status" value="1"/>
</dbReference>
<dbReference type="PANTHER" id="PTHR11706:SF104">
    <property type="entry name" value="METAL TRANSPORTER NRAMP2"/>
    <property type="match status" value="1"/>
</dbReference>
<dbReference type="PANTHER" id="PTHR11706">
    <property type="entry name" value="SOLUTE CARRIER PROTEIN FAMILY 11 MEMBER"/>
    <property type="match status" value="1"/>
</dbReference>
<dbReference type="Pfam" id="PF01566">
    <property type="entry name" value="Nramp"/>
    <property type="match status" value="1"/>
</dbReference>
<dbReference type="PRINTS" id="PR00447">
    <property type="entry name" value="NATRESASSCMP"/>
</dbReference>
<protein>
    <recommendedName>
        <fullName>Metal transporter Nramp6</fullName>
    </recommendedName>
</protein>
<keyword id="KW-0406">Ion transport</keyword>
<keyword id="KW-0408">Iron</keyword>
<keyword id="KW-0410">Iron transport</keyword>
<keyword id="KW-0472">Membrane</keyword>
<keyword id="KW-1185">Reference proteome</keyword>
<keyword id="KW-0812">Transmembrane</keyword>
<keyword id="KW-1133">Transmembrane helix</keyword>
<keyword id="KW-0813">Transport</keyword>
<comment type="function">
    <text evidence="1">Probable metal transporter.</text>
</comment>
<comment type="subcellular location">
    <subcellularLocation>
        <location evidence="4">Membrane</location>
        <topology evidence="4">Multi-pass membrane protein</topology>
    </subcellularLocation>
</comment>
<comment type="similarity">
    <text evidence="4">Belongs to the NRAMP (TC 2.A.55) family.</text>
</comment>
<comment type="sequence caution" evidence="4">
    <conflict type="frameshift">
        <sequence resource="EMBL" id="AK071485"/>
    </conflict>
</comment>
<evidence type="ECO:0000250" key="1"/>
<evidence type="ECO:0000255" key="2"/>
<evidence type="ECO:0000256" key="3">
    <source>
        <dbReference type="SAM" id="MobiDB-lite"/>
    </source>
</evidence>
<evidence type="ECO:0000305" key="4"/>
<proteinExistence type="evidence at transcript level"/>
<accession>Q2QN30</accession>
<accession>A0A0P0YC17</accession>
<gene>
    <name type="primary">NRAMP6</name>
    <name type="ordered locus">Os12g0581600</name>
    <name type="ordered locus">LOC_Os12g39180</name>
    <name type="ORF">OsJ_36661</name>
</gene>
<organism>
    <name type="scientific">Oryza sativa subsp. japonica</name>
    <name type="common">Rice</name>
    <dbReference type="NCBI Taxonomy" id="39947"/>
    <lineage>
        <taxon>Eukaryota</taxon>
        <taxon>Viridiplantae</taxon>
        <taxon>Streptophyta</taxon>
        <taxon>Embryophyta</taxon>
        <taxon>Tracheophyta</taxon>
        <taxon>Spermatophyta</taxon>
        <taxon>Magnoliopsida</taxon>
        <taxon>Liliopsida</taxon>
        <taxon>Poales</taxon>
        <taxon>Poaceae</taxon>
        <taxon>BOP clade</taxon>
        <taxon>Oryzoideae</taxon>
        <taxon>Oryzeae</taxon>
        <taxon>Oryzinae</taxon>
        <taxon>Oryza</taxon>
        <taxon>Oryza sativa</taxon>
    </lineage>
</organism>